<evidence type="ECO:0000250" key="1"/>
<evidence type="ECO:0000250" key="2">
    <source>
        <dbReference type="UniProtKB" id="P20618"/>
    </source>
</evidence>
<evidence type="ECO:0000255" key="3">
    <source>
        <dbReference type="PROSITE-ProRule" id="PRU00809"/>
    </source>
</evidence>
<evidence type="ECO:0000269" key="4">
    <source>
    </source>
</evidence>
<evidence type="ECO:0000269" key="5">
    <source>
    </source>
</evidence>
<evidence type="ECO:0000269" key="6">
    <source>
    </source>
</evidence>
<evidence type="ECO:0000269" key="7">
    <source>
    </source>
</evidence>
<evidence type="ECO:0000269" key="8">
    <source>
    </source>
</evidence>
<evidence type="ECO:0000305" key="9"/>
<evidence type="ECO:0007744" key="10">
    <source>
    </source>
</evidence>
<evidence type="ECO:0007829" key="11">
    <source>
        <dbReference type="PDB" id="3UNB"/>
    </source>
</evidence>
<evidence type="ECO:0007829" key="12">
    <source>
        <dbReference type="PDB" id="3UNE"/>
    </source>
</evidence>
<evidence type="ECO:0007829" key="13">
    <source>
        <dbReference type="PDB" id="5L67"/>
    </source>
</evidence>
<accession>O09061</accession>
<accession>Q62038</accession>
<accession>Q62039</accession>
<organism>
    <name type="scientific">Mus musculus</name>
    <name type="common">Mouse</name>
    <dbReference type="NCBI Taxonomy" id="10090"/>
    <lineage>
        <taxon>Eukaryota</taxon>
        <taxon>Metazoa</taxon>
        <taxon>Chordata</taxon>
        <taxon>Craniata</taxon>
        <taxon>Vertebrata</taxon>
        <taxon>Euteleostomi</taxon>
        <taxon>Mammalia</taxon>
        <taxon>Eutheria</taxon>
        <taxon>Euarchontoglires</taxon>
        <taxon>Glires</taxon>
        <taxon>Rodentia</taxon>
        <taxon>Myomorpha</taxon>
        <taxon>Muroidea</taxon>
        <taxon>Muridae</taxon>
        <taxon>Murinae</taxon>
        <taxon>Mus</taxon>
        <taxon>Mus</taxon>
    </lineage>
</organism>
<comment type="function">
    <text evidence="5 7">Non-catalytic component of the 20S core proteasome complex involved in the proteolytic degradation of most intracellular proteins. This complex plays numerous essential roles within the cell by associating with different regulatory particles. Associated with two 19S regulatory particles, forms the 26S proteasome and thus participates in the ATP-dependent degradation of ubiquitinated proteins. The 26S proteasome plays a key role in the maintenance of protein homeostasis by removing misfolded or damaged proteins that could impair cellular functions, and by removing proteins whose functions are no longer required. Associated with the PA200 or PA28, the 20S proteasome mediates ubiquitin-independent protein degradation. This type of proteolysis is required in several pathways including spermatogenesis (20S-PA200 complex) or generation of a subset of MHC class I-presented antigenic peptides (20S-PA28 complex).</text>
</comment>
<comment type="subunit">
    <text evidence="2 4 6 7">The 26S proteasome consists of a 20S proteasome core and two 19S regulatory subunits. The 20S proteasome core is a barrel-shaped complex made of 28 subunits that are arranged in four stacked rings. The two outer rings are each formed by seven alpha subunits, and the two inner rings are formed by seven beta subunits. The proteolytic activity is exerted by three beta-subunits PSMB5, PSMB6 and PSMB7 (PubMed:16857966, PubMed:22341445). Interacts with SERPINB2 (By similarity). Interacts with RFPL4A (PubMed:12525704).</text>
</comment>
<comment type="subcellular location">
    <subcellularLocation>
        <location evidence="2">Cytoplasm</location>
    </subcellularLocation>
    <subcellularLocation>
        <location evidence="2">Nucleus</location>
    </subcellularLocation>
    <text evidence="2">Translocated from the cytoplasm into the nucleus following interaction with AKIRIN2, which bridges the proteasome with the nuclear import receptor IPO9.</text>
</comment>
<comment type="tissue specificity">
    <text evidence="7">Detected in liver (at protein level).</text>
</comment>
<comment type="similarity">
    <text evidence="3">Belongs to the peptidase T1B family.</text>
</comment>
<comment type="sequence caution" evidence="9">
    <conflict type="erroneous initiation">
        <sequence resource="EMBL-CDS" id="CAA56702"/>
    </conflict>
</comment>
<name>PSB1_MOUSE</name>
<dbReference type="EMBL" id="U60824">
    <property type="protein sequence ID" value="AAB37251.1"/>
    <property type="molecule type" value="mRNA"/>
</dbReference>
<dbReference type="EMBL" id="X80686">
    <property type="protein sequence ID" value="CAA56701.1"/>
    <property type="molecule type" value="mRNA"/>
</dbReference>
<dbReference type="EMBL" id="X80686">
    <property type="protein sequence ID" value="CAA56702.1"/>
    <property type="status" value="ALT_INIT"/>
    <property type="molecule type" value="mRNA"/>
</dbReference>
<dbReference type="EMBL" id="AK077520">
    <property type="protein sequence ID" value="BAC36841.1"/>
    <property type="molecule type" value="mRNA"/>
</dbReference>
<dbReference type="EMBL" id="BC018351">
    <property type="protein sequence ID" value="AAH18351.1"/>
    <property type="molecule type" value="mRNA"/>
</dbReference>
<dbReference type="CCDS" id="CCDS28411.1"/>
<dbReference type="RefSeq" id="NP_035315.1">
    <property type="nucleotide sequence ID" value="NM_011185.3"/>
</dbReference>
<dbReference type="PDB" id="3UNB">
    <property type="method" value="X-ray"/>
    <property type="resolution" value="2.90 A"/>
    <property type="chains" value="2/L/Z/n=28-240"/>
</dbReference>
<dbReference type="PDB" id="3UNE">
    <property type="method" value="X-ray"/>
    <property type="resolution" value="3.20 A"/>
    <property type="chains" value="2/L/Z/n=28-240"/>
</dbReference>
<dbReference type="PDB" id="3UNF">
    <property type="method" value="X-ray"/>
    <property type="resolution" value="2.90 A"/>
    <property type="chains" value="L/Z=28-240"/>
</dbReference>
<dbReference type="PDB" id="3UNH">
    <property type="method" value="X-ray"/>
    <property type="resolution" value="3.20 A"/>
    <property type="chains" value="L/Z=28-240"/>
</dbReference>
<dbReference type="PDB" id="5L65">
    <property type="method" value="X-ray"/>
    <property type="resolution" value="2.90 A"/>
    <property type="chains" value="L/Z=123-137, L/Z=144-159"/>
</dbReference>
<dbReference type="PDB" id="5L66">
    <property type="method" value="X-ray"/>
    <property type="resolution" value="2.80 A"/>
    <property type="chains" value="L/Z=123-137, L/Z=144-159"/>
</dbReference>
<dbReference type="PDB" id="5L67">
    <property type="method" value="X-ray"/>
    <property type="resolution" value="2.60 A"/>
    <property type="chains" value="L/Z=123-137, L/Z=144-159"/>
</dbReference>
<dbReference type="PDB" id="5L68">
    <property type="method" value="X-ray"/>
    <property type="resolution" value="2.80 A"/>
    <property type="chains" value="L/Z=123-137, L/Z=144-159"/>
</dbReference>
<dbReference type="PDB" id="5L69">
    <property type="method" value="X-ray"/>
    <property type="resolution" value="2.70 A"/>
    <property type="chains" value="L/Z=123-137, L/Z=144-159"/>
</dbReference>
<dbReference type="PDB" id="5L6A">
    <property type="method" value="X-ray"/>
    <property type="resolution" value="2.80 A"/>
    <property type="chains" value="L/Z=123-137, L/Z=144-159"/>
</dbReference>
<dbReference type="PDB" id="5L6B">
    <property type="method" value="X-ray"/>
    <property type="resolution" value="2.60 A"/>
    <property type="chains" value="L/Z=123-137, L/Z=144-159"/>
</dbReference>
<dbReference type="PDB" id="5L6C">
    <property type="method" value="X-ray"/>
    <property type="resolution" value="2.60 A"/>
    <property type="chains" value="L/Z=123-137, L/Z=144-159"/>
</dbReference>
<dbReference type="PDB" id="8YPK">
    <property type="method" value="EM"/>
    <property type="resolution" value="2.70 A"/>
    <property type="chains" value="S/X=1-240"/>
</dbReference>
<dbReference type="PDB" id="8YVP">
    <property type="method" value="EM"/>
    <property type="resolution" value="2.50 A"/>
    <property type="chains" value="S/X=1-240"/>
</dbReference>
<dbReference type="PDBsum" id="3UNB"/>
<dbReference type="PDBsum" id="3UNE"/>
<dbReference type="PDBsum" id="3UNF"/>
<dbReference type="PDBsum" id="3UNH"/>
<dbReference type="PDBsum" id="5L65"/>
<dbReference type="PDBsum" id="5L66"/>
<dbReference type="PDBsum" id="5L67"/>
<dbReference type="PDBsum" id="5L68"/>
<dbReference type="PDBsum" id="5L69"/>
<dbReference type="PDBsum" id="5L6A"/>
<dbReference type="PDBsum" id="5L6B"/>
<dbReference type="PDBsum" id="5L6C"/>
<dbReference type="PDBsum" id="8YPK"/>
<dbReference type="PDBsum" id="8YVP"/>
<dbReference type="EMDB" id="EMD-39482"/>
<dbReference type="EMDB" id="EMD-39612"/>
<dbReference type="SMR" id="O09061"/>
<dbReference type="BioGRID" id="202418">
    <property type="interactions" value="54"/>
</dbReference>
<dbReference type="CORUM" id="O09061"/>
<dbReference type="FunCoup" id="O09061">
    <property type="interactions" value="3090"/>
</dbReference>
<dbReference type="IntAct" id="O09061">
    <property type="interactions" value="6"/>
</dbReference>
<dbReference type="MINT" id="O09061"/>
<dbReference type="STRING" id="10090.ENSMUSP00000014913"/>
<dbReference type="BindingDB" id="O09061"/>
<dbReference type="ChEMBL" id="CHEMBL4523121"/>
<dbReference type="GlyCosmos" id="O09061">
    <property type="glycosylation" value="2 sites, No reported glycans"/>
</dbReference>
<dbReference type="GlyGen" id="O09061">
    <property type="glycosylation" value="3 sites, 1 O-linked glycan (3 sites)"/>
</dbReference>
<dbReference type="iPTMnet" id="O09061"/>
<dbReference type="MetOSite" id="O09061"/>
<dbReference type="PhosphoSitePlus" id="O09061"/>
<dbReference type="SwissPalm" id="O09061"/>
<dbReference type="CPTAC" id="non-CPTAC-3943"/>
<dbReference type="jPOST" id="O09061"/>
<dbReference type="PaxDb" id="10090-ENSMUSP00000014913"/>
<dbReference type="PeptideAtlas" id="O09061"/>
<dbReference type="ProteomicsDB" id="291607"/>
<dbReference type="Pumba" id="O09061"/>
<dbReference type="Antibodypedia" id="33582">
    <property type="antibodies" value="235 antibodies from 32 providers"/>
</dbReference>
<dbReference type="DNASU" id="19170"/>
<dbReference type="Ensembl" id="ENSMUST00000014913.11">
    <property type="protein sequence ID" value="ENSMUSP00000014913.9"/>
    <property type="gene ID" value="ENSMUSG00000014769.11"/>
</dbReference>
<dbReference type="GeneID" id="19170"/>
<dbReference type="KEGG" id="mmu:19170"/>
<dbReference type="UCSC" id="uc008aol.1">
    <property type="organism name" value="mouse"/>
</dbReference>
<dbReference type="AGR" id="MGI:104884"/>
<dbReference type="CTD" id="5689"/>
<dbReference type="MGI" id="MGI:104884">
    <property type="gene designation" value="Psmb1"/>
</dbReference>
<dbReference type="VEuPathDB" id="HostDB:ENSMUSG00000014769"/>
<dbReference type="eggNOG" id="KOG0179">
    <property type="taxonomic scope" value="Eukaryota"/>
</dbReference>
<dbReference type="GeneTree" id="ENSGT00550000075035"/>
<dbReference type="HOGENOM" id="CLU_035750_1_1_1"/>
<dbReference type="InParanoid" id="O09061"/>
<dbReference type="OMA" id="CSGCWCD"/>
<dbReference type="OrthoDB" id="268479at2759"/>
<dbReference type="PhylomeDB" id="O09061"/>
<dbReference type="TreeFam" id="TF106218"/>
<dbReference type="Reactome" id="R-MMU-1169091">
    <property type="pathway name" value="Activation of NF-kappaB in B cells"/>
</dbReference>
<dbReference type="Reactome" id="R-MMU-1234176">
    <property type="pathway name" value="Oxygen-dependent proline hydroxylation of Hypoxia-inducible Factor Alpha"/>
</dbReference>
<dbReference type="Reactome" id="R-MMU-1236978">
    <property type="pathway name" value="Cross-presentation of soluble exogenous antigens (endosomes)"/>
</dbReference>
<dbReference type="Reactome" id="R-MMU-174084">
    <property type="pathway name" value="Autodegradation of Cdh1 by Cdh1:APC/C"/>
</dbReference>
<dbReference type="Reactome" id="R-MMU-174154">
    <property type="pathway name" value="APC/C:Cdc20 mediated degradation of Securin"/>
</dbReference>
<dbReference type="Reactome" id="R-MMU-174178">
    <property type="pathway name" value="APC/C:Cdh1 mediated degradation of Cdc20 and other APC/C:Cdh1 targeted proteins in late mitosis/early G1"/>
</dbReference>
<dbReference type="Reactome" id="R-MMU-174184">
    <property type="pathway name" value="Cdc20:Phospho-APC/C mediated degradation of Cyclin A"/>
</dbReference>
<dbReference type="Reactome" id="R-MMU-187577">
    <property type="pathway name" value="SCF(Skp2)-mediated degradation of p27/p21"/>
</dbReference>
<dbReference type="Reactome" id="R-MMU-195253">
    <property type="pathway name" value="Degradation of beta-catenin by the destruction complex"/>
</dbReference>
<dbReference type="Reactome" id="R-MMU-202424">
    <property type="pathway name" value="Downstream TCR signaling"/>
</dbReference>
<dbReference type="Reactome" id="R-MMU-2467813">
    <property type="pathway name" value="Separation of Sister Chromatids"/>
</dbReference>
<dbReference type="Reactome" id="R-MMU-2871837">
    <property type="pathway name" value="FCERI mediated NF-kB activation"/>
</dbReference>
<dbReference type="Reactome" id="R-MMU-349425">
    <property type="pathway name" value="Autodegradation of the E3 ubiquitin ligase COP1"/>
</dbReference>
<dbReference type="Reactome" id="R-MMU-350562">
    <property type="pathway name" value="Regulation of ornithine decarboxylase (ODC)"/>
</dbReference>
<dbReference type="Reactome" id="R-MMU-382556">
    <property type="pathway name" value="ABC-family proteins mediated transport"/>
</dbReference>
<dbReference type="Reactome" id="R-MMU-450408">
    <property type="pathway name" value="AUF1 (hnRNP D0) binds and destabilizes mRNA"/>
</dbReference>
<dbReference type="Reactome" id="R-MMU-4608870">
    <property type="pathway name" value="Asymmetric localization of PCP proteins"/>
</dbReference>
<dbReference type="Reactome" id="R-MMU-4641257">
    <property type="pathway name" value="Degradation of AXIN"/>
</dbReference>
<dbReference type="Reactome" id="R-MMU-4641258">
    <property type="pathway name" value="Degradation of DVL"/>
</dbReference>
<dbReference type="Reactome" id="R-MMU-5358346">
    <property type="pathway name" value="Hedgehog ligand biogenesis"/>
</dbReference>
<dbReference type="Reactome" id="R-MMU-5607761">
    <property type="pathway name" value="Dectin-1 mediated noncanonical NF-kB signaling"/>
</dbReference>
<dbReference type="Reactome" id="R-MMU-5607764">
    <property type="pathway name" value="CLEC7A (Dectin-1) signaling"/>
</dbReference>
<dbReference type="Reactome" id="R-MMU-5610780">
    <property type="pathway name" value="Degradation of GLI1 by the proteasome"/>
</dbReference>
<dbReference type="Reactome" id="R-MMU-5610785">
    <property type="pathway name" value="GLI3 is processed to GLI3R by the proteasome"/>
</dbReference>
<dbReference type="Reactome" id="R-MMU-5632684">
    <property type="pathway name" value="Hedgehog 'on' state"/>
</dbReference>
<dbReference type="Reactome" id="R-MMU-5658442">
    <property type="pathway name" value="Regulation of RAS by GAPs"/>
</dbReference>
<dbReference type="Reactome" id="R-MMU-5668541">
    <property type="pathway name" value="TNFR2 non-canonical NF-kB pathway"/>
</dbReference>
<dbReference type="Reactome" id="R-MMU-5676590">
    <property type="pathway name" value="NIK--&gt;noncanonical NF-kB signaling"/>
</dbReference>
<dbReference type="Reactome" id="R-MMU-5687128">
    <property type="pathway name" value="MAPK6/MAPK4 signaling"/>
</dbReference>
<dbReference type="Reactome" id="R-MMU-5689603">
    <property type="pathway name" value="UCH proteinases"/>
</dbReference>
<dbReference type="Reactome" id="R-MMU-5689880">
    <property type="pathway name" value="Ub-specific processing proteases"/>
</dbReference>
<dbReference type="Reactome" id="R-MMU-6798695">
    <property type="pathway name" value="Neutrophil degranulation"/>
</dbReference>
<dbReference type="Reactome" id="R-MMU-68867">
    <property type="pathway name" value="Assembly of the pre-replicative complex"/>
</dbReference>
<dbReference type="Reactome" id="R-MMU-68949">
    <property type="pathway name" value="Orc1 removal from chromatin"/>
</dbReference>
<dbReference type="Reactome" id="R-MMU-69017">
    <property type="pathway name" value="CDK-mediated phosphorylation and removal of Cdc6"/>
</dbReference>
<dbReference type="Reactome" id="R-MMU-69481">
    <property type="pathway name" value="G2/M Checkpoints"/>
</dbReference>
<dbReference type="Reactome" id="R-MMU-69601">
    <property type="pathway name" value="Ubiquitin Mediated Degradation of Phosphorylated Cdc25A"/>
</dbReference>
<dbReference type="Reactome" id="R-MMU-75815">
    <property type="pathway name" value="Ubiquitin-dependent degradation of Cyclin D"/>
</dbReference>
<dbReference type="Reactome" id="R-MMU-8852276">
    <property type="pathway name" value="The role of GTSE1 in G2/M progression after G2 checkpoint"/>
</dbReference>
<dbReference type="Reactome" id="R-MMU-8854050">
    <property type="pathway name" value="FBXL7 down-regulates AURKA during mitotic entry and in early mitosis"/>
</dbReference>
<dbReference type="Reactome" id="R-MMU-8939236">
    <property type="pathway name" value="RUNX1 regulates transcription of genes involved in differentiation of HSCs"/>
</dbReference>
<dbReference type="Reactome" id="R-MMU-8939902">
    <property type="pathway name" value="Regulation of RUNX2 expression and activity"/>
</dbReference>
<dbReference type="Reactome" id="R-MMU-8941858">
    <property type="pathway name" value="Regulation of RUNX3 expression and activity"/>
</dbReference>
<dbReference type="Reactome" id="R-MMU-8948751">
    <property type="pathway name" value="Regulation of PTEN stability and activity"/>
</dbReference>
<dbReference type="Reactome" id="R-MMU-8951664">
    <property type="pathway name" value="Neddylation"/>
</dbReference>
<dbReference type="Reactome" id="R-MMU-9020702">
    <property type="pathway name" value="Interleukin-1 signaling"/>
</dbReference>
<dbReference type="Reactome" id="R-MMU-9755511">
    <property type="pathway name" value="KEAP1-NFE2L2 pathway"/>
</dbReference>
<dbReference type="Reactome" id="R-MMU-9762114">
    <property type="pathway name" value="GSK3B and BTRC:CUL1-mediated-degradation of NFE2L2"/>
</dbReference>
<dbReference type="Reactome" id="R-MMU-983168">
    <property type="pathway name" value="Antigen processing: Ubiquitination &amp; Proteasome degradation"/>
</dbReference>
<dbReference type="Reactome" id="R-MMU-9907900">
    <property type="pathway name" value="Proteasome assembly"/>
</dbReference>
<dbReference type="BioGRID-ORCS" id="19170">
    <property type="hits" value="33 hits in 78 CRISPR screens"/>
</dbReference>
<dbReference type="ChiTaRS" id="Psmb1">
    <property type="organism name" value="mouse"/>
</dbReference>
<dbReference type="EvolutionaryTrace" id="O09061"/>
<dbReference type="PRO" id="PR:O09061"/>
<dbReference type="Proteomes" id="UP000000589">
    <property type="component" value="Chromosome 17"/>
</dbReference>
<dbReference type="RNAct" id="O09061">
    <property type="molecule type" value="protein"/>
</dbReference>
<dbReference type="Bgee" id="ENSMUSG00000014769">
    <property type="expression patterns" value="Expressed in medial ganglionic eminence and 269 other cell types or tissues"/>
</dbReference>
<dbReference type="ExpressionAtlas" id="O09061">
    <property type="expression patterns" value="baseline and differential"/>
</dbReference>
<dbReference type="GO" id="GO:0005829">
    <property type="term" value="C:cytosol"/>
    <property type="evidence" value="ECO:0000304"/>
    <property type="project" value="Reactome"/>
</dbReference>
<dbReference type="GO" id="GO:0005654">
    <property type="term" value="C:nucleoplasm"/>
    <property type="evidence" value="ECO:0000304"/>
    <property type="project" value="Reactome"/>
</dbReference>
<dbReference type="GO" id="GO:0005839">
    <property type="term" value="C:proteasome core complex"/>
    <property type="evidence" value="ECO:0000314"/>
    <property type="project" value="UniProtKB"/>
</dbReference>
<dbReference type="GO" id="GO:0019774">
    <property type="term" value="C:proteasome core complex, beta-subunit complex"/>
    <property type="evidence" value="ECO:0000250"/>
    <property type="project" value="UniProtKB"/>
</dbReference>
<dbReference type="GO" id="GO:0051603">
    <property type="term" value="P:proteolysis involved in protein catabolic process"/>
    <property type="evidence" value="ECO:0007669"/>
    <property type="project" value="InterPro"/>
</dbReference>
<dbReference type="CDD" id="cd03757">
    <property type="entry name" value="proteasome_beta_type_1"/>
    <property type="match status" value="1"/>
</dbReference>
<dbReference type="FunFam" id="3.60.20.10:FF:000033">
    <property type="entry name" value="Proteasome subunit beta"/>
    <property type="match status" value="1"/>
</dbReference>
<dbReference type="Gene3D" id="3.60.20.10">
    <property type="entry name" value="Glutamine Phosphoribosylpyrophosphate, subunit 1, domain 1"/>
    <property type="match status" value="1"/>
</dbReference>
<dbReference type="InterPro" id="IPR029055">
    <property type="entry name" value="Ntn_hydrolases_N"/>
</dbReference>
<dbReference type="InterPro" id="IPR016050">
    <property type="entry name" value="Proteasome_bsu_CS"/>
</dbReference>
<dbReference type="InterPro" id="IPR001353">
    <property type="entry name" value="Proteasome_sua/b"/>
</dbReference>
<dbReference type="InterPro" id="IPR023333">
    <property type="entry name" value="Proteasome_suB-type"/>
</dbReference>
<dbReference type="PANTHER" id="PTHR32194">
    <property type="entry name" value="METALLOPROTEASE TLDD"/>
    <property type="match status" value="1"/>
</dbReference>
<dbReference type="PANTHER" id="PTHR32194:SF2">
    <property type="entry name" value="PROTEASOME SUBUNIT BETA TYPE-1"/>
    <property type="match status" value="1"/>
</dbReference>
<dbReference type="Pfam" id="PF00227">
    <property type="entry name" value="Proteasome"/>
    <property type="match status" value="1"/>
</dbReference>
<dbReference type="SUPFAM" id="SSF56235">
    <property type="entry name" value="N-terminal nucleophile aminohydrolases (Ntn hydrolases)"/>
    <property type="match status" value="1"/>
</dbReference>
<dbReference type="PROSITE" id="PS00854">
    <property type="entry name" value="PROTEASOME_BETA_1"/>
    <property type="match status" value="1"/>
</dbReference>
<dbReference type="PROSITE" id="PS51476">
    <property type="entry name" value="PROTEASOME_BETA_2"/>
    <property type="match status" value="1"/>
</dbReference>
<reference key="1">
    <citation type="journal article" date="1995" name="DNA Seq.">
        <title>Cloning and sequencing of a murine cDNA encoding the proteasome component C5.</title>
        <authorList>
            <person name="Savioz A."/>
            <person name="Houghton I."/>
            <person name="Davies R.W."/>
        </authorList>
    </citation>
    <scope>NUCLEOTIDE SEQUENCE [MRNA]</scope>
    <source>
        <strain>C57BL/10J</strain>
        <tissue>Brain</tissue>
        <tissue>Testis</tissue>
    </source>
</reference>
<reference key="2">
    <citation type="journal article" date="2005" name="Science">
        <title>The transcriptional landscape of the mammalian genome.</title>
        <authorList>
            <person name="Carninci P."/>
            <person name="Kasukawa T."/>
            <person name="Katayama S."/>
            <person name="Gough J."/>
            <person name="Frith M.C."/>
            <person name="Maeda N."/>
            <person name="Oyama R."/>
            <person name="Ravasi T."/>
            <person name="Lenhard B."/>
            <person name="Wells C."/>
            <person name="Kodzius R."/>
            <person name="Shimokawa K."/>
            <person name="Bajic V.B."/>
            <person name="Brenner S.E."/>
            <person name="Batalov S."/>
            <person name="Forrest A.R."/>
            <person name="Zavolan M."/>
            <person name="Davis M.J."/>
            <person name="Wilming L.G."/>
            <person name="Aidinis V."/>
            <person name="Allen J.E."/>
            <person name="Ambesi-Impiombato A."/>
            <person name="Apweiler R."/>
            <person name="Aturaliya R.N."/>
            <person name="Bailey T.L."/>
            <person name="Bansal M."/>
            <person name="Baxter L."/>
            <person name="Beisel K.W."/>
            <person name="Bersano T."/>
            <person name="Bono H."/>
            <person name="Chalk A.M."/>
            <person name="Chiu K.P."/>
            <person name="Choudhary V."/>
            <person name="Christoffels A."/>
            <person name="Clutterbuck D.R."/>
            <person name="Crowe M.L."/>
            <person name="Dalla E."/>
            <person name="Dalrymple B.P."/>
            <person name="de Bono B."/>
            <person name="Della Gatta G."/>
            <person name="di Bernardo D."/>
            <person name="Down T."/>
            <person name="Engstrom P."/>
            <person name="Fagiolini M."/>
            <person name="Faulkner G."/>
            <person name="Fletcher C.F."/>
            <person name="Fukushima T."/>
            <person name="Furuno M."/>
            <person name="Futaki S."/>
            <person name="Gariboldi M."/>
            <person name="Georgii-Hemming P."/>
            <person name="Gingeras T.R."/>
            <person name="Gojobori T."/>
            <person name="Green R.E."/>
            <person name="Gustincich S."/>
            <person name="Harbers M."/>
            <person name="Hayashi Y."/>
            <person name="Hensch T.K."/>
            <person name="Hirokawa N."/>
            <person name="Hill D."/>
            <person name="Huminiecki L."/>
            <person name="Iacono M."/>
            <person name="Ikeo K."/>
            <person name="Iwama A."/>
            <person name="Ishikawa T."/>
            <person name="Jakt M."/>
            <person name="Kanapin A."/>
            <person name="Katoh M."/>
            <person name="Kawasawa Y."/>
            <person name="Kelso J."/>
            <person name="Kitamura H."/>
            <person name="Kitano H."/>
            <person name="Kollias G."/>
            <person name="Krishnan S.P."/>
            <person name="Kruger A."/>
            <person name="Kummerfeld S.K."/>
            <person name="Kurochkin I.V."/>
            <person name="Lareau L.F."/>
            <person name="Lazarevic D."/>
            <person name="Lipovich L."/>
            <person name="Liu J."/>
            <person name="Liuni S."/>
            <person name="McWilliam S."/>
            <person name="Madan Babu M."/>
            <person name="Madera M."/>
            <person name="Marchionni L."/>
            <person name="Matsuda H."/>
            <person name="Matsuzawa S."/>
            <person name="Miki H."/>
            <person name="Mignone F."/>
            <person name="Miyake S."/>
            <person name="Morris K."/>
            <person name="Mottagui-Tabar S."/>
            <person name="Mulder N."/>
            <person name="Nakano N."/>
            <person name="Nakauchi H."/>
            <person name="Ng P."/>
            <person name="Nilsson R."/>
            <person name="Nishiguchi S."/>
            <person name="Nishikawa S."/>
            <person name="Nori F."/>
            <person name="Ohara O."/>
            <person name="Okazaki Y."/>
            <person name="Orlando V."/>
            <person name="Pang K.C."/>
            <person name="Pavan W.J."/>
            <person name="Pavesi G."/>
            <person name="Pesole G."/>
            <person name="Petrovsky N."/>
            <person name="Piazza S."/>
            <person name="Reed J."/>
            <person name="Reid J.F."/>
            <person name="Ring B.Z."/>
            <person name="Ringwald M."/>
            <person name="Rost B."/>
            <person name="Ruan Y."/>
            <person name="Salzberg S.L."/>
            <person name="Sandelin A."/>
            <person name="Schneider C."/>
            <person name="Schoenbach C."/>
            <person name="Sekiguchi K."/>
            <person name="Semple C.A."/>
            <person name="Seno S."/>
            <person name="Sessa L."/>
            <person name="Sheng Y."/>
            <person name="Shibata Y."/>
            <person name="Shimada H."/>
            <person name="Shimada K."/>
            <person name="Silva D."/>
            <person name="Sinclair B."/>
            <person name="Sperling S."/>
            <person name="Stupka E."/>
            <person name="Sugiura K."/>
            <person name="Sultana R."/>
            <person name="Takenaka Y."/>
            <person name="Taki K."/>
            <person name="Tammoja K."/>
            <person name="Tan S.L."/>
            <person name="Tang S."/>
            <person name="Taylor M.S."/>
            <person name="Tegner J."/>
            <person name="Teichmann S.A."/>
            <person name="Ueda H.R."/>
            <person name="van Nimwegen E."/>
            <person name="Verardo R."/>
            <person name="Wei C.L."/>
            <person name="Yagi K."/>
            <person name="Yamanishi H."/>
            <person name="Zabarovsky E."/>
            <person name="Zhu S."/>
            <person name="Zimmer A."/>
            <person name="Hide W."/>
            <person name="Bult C."/>
            <person name="Grimmond S.M."/>
            <person name="Teasdale R.D."/>
            <person name="Liu E.T."/>
            <person name="Brusic V."/>
            <person name="Quackenbush J."/>
            <person name="Wahlestedt C."/>
            <person name="Mattick J.S."/>
            <person name="Hume D.A."/>
            <person name="Kai C."/>
            <person name="Sasaki D."/>
            <person name="Tomaru Y."/>
            <person name="Fukuda S."/>
            <person name="Kanamori-Katayama M."/>
            <person name="Suzuki M."/>
            <person name="Aoki J."/>
            <person name="Arakawa T."/>
            <person name="Iida J."/>
            <person name="Imamura K."/>
            <person name="Itoh M."/>
            <person name="Kato T."/>
            <person name="Kawaji H."/>
            <person name="Kawagashira N."/>
            <person name="Kawashima T."/>
            <person name="Kojima M."/>
            <person name="Kondo S."/>
            <person name="Konno H."/>
            <person name="Nakano K."/>
            <person name="Ninomiya N."/>
            <person name="Nishio T."/>
            <person name="Okada M."/>
            <person name="Plessy C."/>
            <person name="Shibata K."/>
            <person name="Shiraki T."/>
            <person name="Suzuki S."/>
            <person name="Tagami M."/>
            <person name="Waki K."/>
            <person name="Watahiki A."/>
            <person name="Okamura-Oho Y."/>
            <person name="Suzuki H."/>
            <person name="Kawai J."/>
            <person name="Hayashizaki Y."/>
        </authorList>
    </citation>
    <scope>NUCLEOTIDE SEQUENCE [LARGE SCALE MRNA]</scope>
    <source>
        <strain>C57BL/6J</strain>
    </source>
</reference>
<reference key="3">
    <citation type="journal article" date="2004" name="Genome Res.">
        <title>The status, quality, and expansion of the NIH full-length cDNA project: the Mammalian Gene Collection (MGC).</title>
        <authorList>
            <consortium name="The MGC Project Team"/>
        </authorList>
    </citation>
    <scope>NUCLEOTIDE SEQUENCE [LARGE SCALE MRNA]</scope>
    <source>
        <strain>FVB/N</strain>
        <tissue>Mammary gland</tissue>
    </source>
</reference>
<reference key="4">
    <citation type="submission" date="2007-04" db="UniProtKB">
        <authorList>
            <person name="Lubec G."/>
            <person name="Kang S.U."/>
        </authorList>
    </citation>
    <scope>PROTEIN SEQUENCE OF 77-93; 109-126; 146-159; 164-197 AND 204-212</scope>
    <scope>IDENTIFICATION BY MASS SPECTROMETRY</scope>
    <source>
        <strain>C57BL/6J</strain>
        <tissue>Brain</tissue>
    </source>
</reference>
<reference key="5">
    <citation type="journal article" date="2003" name="Proc. Natl. Acad. Sci. U.S.A.">
        <title>RFPL4 interacts with oocyte proteins of the ubiquitin-proteasome degradation pathway.</title>
        <authorList>
            <person name="Suzumori N."/>
            <person name="Burns K.H."/>
            <person name="Yan W."/>
            <person name="Matzuk M.M."/>
        </authorList>
    </citation>
    <scope>INTERACTION WITH RFPL4A</scope>
</reference>
<reference key="6">
    <citation type="journal article" date="2006" name="Circ. Res.">
        <title>Mapping the murine cardiac 26S proteasome complexes.</title>
        <authorList>
            <person name="Gomes A.V."/>
            <person name="Zong C."/>
            <person name="Edmondson R.D."/>
            <person name="Li X."/>
            <person name="Stefani E."/>
            <person name="Zhang J."/>
            <person name="Jones R.C."/>
            <person name="Thyparambil S."/>
            <person name="Wang G.W."/>
            <person name="Qiao X."/>
            <person name="Bardag-Gorce F."/>
            <person name="Ping P."/>
        </authorList>
    </citation>
    <scope>IDENTIFICATION IN THE 20S PROTEASOME CORE COMPLEX</scope>
</reference>
<reference key="7">
    <citation type="journal article" date="2006" name="Mol. Cell. Biol.">
        <title>Proteasome activator PA200 is required for normal spermatogenesis.</title>
        <authorList>
            <person name="Khor B."/>
            <person name="Bredemeyer A.L."/>
            <person name="Huang C.-Y."/>
            <person name="Turnbull I.R."/>
            <person name="Evans R."/>
            <person name="Maggi L.B. Jr."/>
            <person name="White J.M."/>
            <person name="Walker L.M."/>
            <person name="Carnes K."/>
            <person name="Hess R.A."/>
            <person name="Sleckman B.P."/>
        </authorList>
    </citation>
    <scope>FUNCTION</scope>
</reference>
<reference key="8">
    <citation type="journal article" date="2008" name="J. Proteome Res.">
        <title>Large-scale identification and evolution indexing of tyrosine phosphorylation sites from murine brain.</title>
        <authorList>
            <person name="Ballif B.A."/>
            <person name="Carey G.R."/>
            <person name="Sunyaev S.R."/>
            <person name="Gygi S.P."/>
        </authorList>
    </citation>
    <scope>PHOSPHORYLATION [LARGE SCALE ANALYSIS] AT TYR-149</scope>
    <scope>IDENTIFICATION BY MASS SPECTROMETRY [LARGE SCALE ANALYSIS]</scope>
    <source>
        <tissue>Brain</tissue>
    </source>
</reference>
<reference key="9">
    <citation type="journal article" date="2010" name="Cell">
        <title>A tissue-specific atlas of mouse protein phosphorylation and expression.</title>
        <authorList>
            <person name="Huttlin E.L."/>
            <person name="Jedrychowski M.P."/>
            <person name="Elias J.E."/>
            <person name="Goswami T."/>
            <person name="Rad R."/>
            <person name="Beausoleil S.A."/>
            <person name="Villen J."/>
            <person name="Haas W."/>
            <person name="Sowa M.E."/>
            <person name="Gygi S.P."/>
        </authorList>
    </citation>
    <scope>IDENTIFICATION BY MASS SPECTROMETRY [LARGE SCALE ANALYSIS]</scope>
    <source>
        <tissue>Brain</tissue>
        <tissue>Brown adipose tissue</tissue>
        <tissue>Heart</tissue>
        <tissue>Kidney</tissue>
        <tissue>Liver</tissue>
        <tissue>Lung</tissue>
        <tissue>Pancreas</tissue>
        <tissue>Spleen</tissue>
        <tissue>Testis</tissue>
    </source>
</reference>
<reference key="10">
    <citation type="journal article" date="2012" name="Mol. Cell. Proteomics">
        <title>Mapping of O-GlcNAc sites of 20 S proteasome subunits and Hsp90 by a novel biotin-cystamine tag.</title>
        <authorList>
            <person name="Overath T."/>
            <person name="Kuckelkorn U."/>
            <person name="Henklein P."/>
            <person name="Strehl B."/>
            <person name="Bonar D."/>
            <person name="Kloss A."/>
            <person name="Siele D."/>
            <person name="Kloetzel P.M."/>
            <person name="Janek K."/>
        </authorList>
    </citation>
    <scope>GLYCOSYLATION AT SER-57 AND SER-208</scope>
    <source>
        <tissue>Brain</tissue>
        <tissue>Spleen</tissue>
    </source>
</reference>
<reference key="11">
    <citation type="journal article" date="2012" name="Cell">
        <title>Immuno- and constitutive proteasome crystal structures reveal differences in substrate and inhibitor specificity.</title>
        <authorList>
            <person name="Huber E.M."/>
            <person name="Basler M."/>
            <person name="Schwab R."/>
            <person name="Heinemeyer W."/>
            <person name="Kirk C.J."/>
            <person name="Groettrup M."/>
            <person name="Groll M."/>
        </authorList>
    </citation>
    <scope>X-RAY CRYSTALLOGRAPHY (2.90 ANGSTROMS) OF 20S IMMUNOPROTEASOME</scope>
    <scope>SUBUNIT</scope>
    <scope>FUNCTION</scope>
    <scope>TISSUE SPECIFICITY</scope>
</reference>
<sequence length="240" mass="26372">MLSTAAYRDVERELGMGPHGSAGPVQLRFSPYAFNGGTVLAIAGEDFSIVASDTRLSEGFSIHTRDSPKCYKLTDKTVIGCSGFHGDCLTLTKIIEARLKMYKHSNNKAMTTGAIAAMLSTILYSRRFFPYYVYNIIGGLDEEGKGAVYSFDPVGSYQRDSFKAGGSASAMLQPLLDNQVGFKNMQNVEHVPLTLDRAMRLVKDVFISAAERDVYTGDALRICIVTKEGIREETVPLRKD</sequence>
<proteinExistence type="evidence at protein level"/>
<gene>
    <name type="primary">Psmb1</name>
</gene>
<protein>
    <recommendedName>
        <fullName>Proteasome subunit beta type-1</fullName>
    </recommendedName>
    <alternativeName>
        <fullName>Macropain subunit C5</fullName>
    </alternativeName>
    <alternativeName>
        <fullName>Multicatalytic endopeptidase complex subunit C5</fullName>
    </alternativeName>
    <alternativeName>
        <fullName>Proteasome component C5</fullName>
    </alternativeName>
    <alternativeName>
        <fullName>Proteasome gamma chain</fullName>
    </alternativeName>
    <alternativeName>
        <fullName>Proteasome subunit beta-6</fullName>
        <shortName>beta-6</shortName>
    </alternativeName>
</protein>
<feature type="propeptide" id="PRO_0000259624" evidence="1">
    <location>
        <begin position="1"/>
        <end position="27"/>
    </location>
</feature>
<feature type="chain" id="PRO_0000148031" description="Proteasome subunit beta type-1">
    <location>
        <begin position="28"/>
        <end position="240"/>
    </location>
</feature>
<feature type="modified residue" description="N-acetylmethionine" evidence="2">
    <location>
        <position position="1"/>
    </location>
</feature>
<feature type="modified residue" description="Phosphoserine" evidence="2">
    <location>
        <position position="61"/>
    </location>
</feature>
<feature type="modified residue" description="Phosphoserine" evidence="2">
    <location>
        <position position="67"/>
    </location>
</feature>
<feature type="modified residue" description="Phosphotyrosine" evidence="10">
    <location>
        <position position="149"/>
    </location>
</feature>
<feature type="modified residue" description="Phosphoserine" evidence="2">
    <location>
        <position position="161"/>
    </location>
</feature>
<feature type="modified residue" description="N6-acetyllysine" evidence="2">
    <location>
        <position position="203"/>
    </location>
</feature>
<feature type="glycosylation site" description="O-linked (GlcNAc) serine" evidence="8">
    <location>
        <position position="57"/>
    </location>
</feature>
<feature type="glycosylation site" description="O-linked (GlcNAc) serine" evidence="8">
    <location>
        <position position="208"/>
    </location>
</feature>
<feature type="strand" evidence="11">
    <location>
        <begin position="38"/>
        <end position="43"/>
    </location>
</feature>
<feature type="strand" evidence="11">
    <location>
        <begin position="48"/>
        <end position="53"/>
    </location>
</feature>
<feature type="strand" evidence="11">
    <location>
        <begin position="56"/>
        <end position="58"/>
    </location>
</feature>
<feature type="strand" evidence="11">
    <location>
        <begin position="61"/>
        <end position="65"/>
    </location>
</feature>
<feature type="strand" evidence="11">
    <location>
        <begin position="70"/>
        <end position="72"/>
    </location>
</feature>
<feature type="strand" evidence="11">
    <location>
        <begin position="74"/>
        <end position="83"/>
    </location>
</feature>
<feature type="helix" evidence="11">
    <location>
        <begin position="85"/>
        <end position="106"/>
    </location>
</feature>
<feature type="helix" evidence="11">
    <location>
        <begin position="112"/>
        <end position="124"/>
    </location>
</feature>
<feature type="turn" evidence="13">
    <location>
        <begin position="125"/>
        <end position="128"/>
    </location>
</feature>
<feature type="strand" evidence="13">
    <location>
        <begin position="133"/>
        <end position="137"/>
    </location>
</feature>
<feature type="strand" evidence="12">
    <location>
        <begin position="142"/>
        <end position="144"/>
    </location>
</feature>
<feature type="strand" evidence="11">
    <location>
        <begin position="146"/>
        <end position="151"/>
    </location>
</feature>
<feature type="strand" evidence="11">
    <location>
        <begin position="157"/>
        <end position="166"/>
    </location>
</feature>
<feature type="helix" evidence="11">
    <location>
        <begin position="169"/>
        <end position="179"/>
    </location>
</feature>
<feature type="helix" evidence="11">
    <location>
        <begin position="195"/>
        <end position="212"/>
    </location>
</feature>
<feature type="strand" evidence="11">
    <location>
        <begin position="213"/>
        <end position="215"/>
    </location>
</feature>
<feature type="strand" evidence="11">
    <location>
        <begin position="218"/>
        <end position="226"/>
    </location>
</feature>
<feature type="strand" evidence="11">
    <location>
        <begin position="229"/>
        <end position="236"/>
    </location>
</feature>
<keyword id="KW-0002">3D-structure</keyword>
<keyword id="KW-0007">Acetylation</keyword>
<keyword id="KW-0963">Cytoplasm</keyword>
<keyword id="KW-0903">Direct protein sequencing</keyword>
<keyword id="KW-0325">Glycoprotein</keyword>
<keyword id="KW-0539">Nucleus</keyword>
<keyword id="KW-0597">Phosphoprotein</keyword>
<keyword id="KW-0647">Proteasome</keyword>
<keyword id="KW-1185">Reference proteome</keyword>